<sequence>MFKSSKFKGKKACVLGMGKSGLAAARLLAENGFSVLISDGGKREIPGNLHKNIEVETGGHTNKILDCGFIVKSPGISSNMPVLKKIKNKKIPIFSEIEISISFLPKGCRIFAVTGTNGKTTTTMLLSEILKQFIKNKEFNKNVFTVGNIGCPLAEVMSEIKQHDLIVMEVSSYQLEDSSYFKPYAATILNITPDHIDHHGSFKKYLDAKSKIFKFQTQKDIAVINSADKNCLKAAKNIKSKLYGFATTPLQQIRSHVFYDGDELVFSAGERISPPKLPGIHNVENAMAASLLALAAGVDSQSIQQAFNKFKTVEHRIELLGIKKGISFINDSKATNIDSTIIALRSMPDGKKTWLILGGQDKGSPYGVLLPLLETKCKKVLLVGQAAAKIKKDLPGYKYFNVCGTIDKAVEYAFNNAQKEDIILLSPACASFDQFNNFEERGKFFKQIYKSL</sequence>
<proteinExistence type="inferred from homology"/>
<name>MURD_ELUMP</name>
<evidence type="ECO:0000255" key="1">
    <source>
        <dbReference type="HAMAP-Rule" id="MF_00639"/>
    </source>
</evidence>
<dbReference type="EC" id="6.3.2.9" evidence="1"/>
<dbReference type="EMBL" id="CP001055">
    <property type="protein sequence ID" value="ACC99060.1"/>
    <property type="molecule type" value="Genomic_DNA"/>
</dbReference>
<dbReference type="RefSeq" id="WP_012415674.1">
    <property type="nucleotide sequence ID" value="NC_010644.1"/>
</dbReference>
<dbReference type="SMR" id="B2KEW4"/>
<dbReference type="STRING" id="445932.Emin_1512"/>
<dbReference type="KEGG" id="emi:Emin_1512"/>
<dbReference type="HOGENOM" id="CLU_032540_0_1_0"/>
<dbReference type="UniPathway" id="UPA00219"/>
<dbReference type="Proteomes" id="UP000001029">
    <property type="component" value="Chromosome"/>
</dbReference>
<dbReference type="GO" id="GO:0005737">
    <property type="term" value="C:cytoplasm"/>
    <property type="evidence" value="ECO:0007669"/>
    <property type="project" value="UniProtKB-SubCell"/>
</dbReference>
<dbReference type="GO" id="GO:0005524">
    <property type="term" value="F:ATP binding"/>
    <property type="evidence" value="ECO:0007669"/>
    <property type="project" value="UniProtKB-UniRule"/>
</dbReference>
<dbReference type="GO" id="GO:0008764">
    <property type="term" value="F:UDP-N-acetylmuramoylalanine-D-glutamate ligase activity"/>
    <property type="evidence" value="ECO:0007669"/>
    <property type="project" value="UniProtKB-UniRule"/>
</dbReference>
<dbReference type="GO" id="GO:0051301">
    <property type="term" value="P:cell division"/>
    <property type="evidence" value="ECO:0007669"/>
    <property type="project" value="UniProtKB-KW"/>
</dbReference>
<dbReference type="GO" id="GO:0071555">
    <property type="term" value="P:cell wall organization"/>
    <property type="evidence" value="ECO:0007669"/>
    <property type="project" value="UniProtKB-KW"/>
</dbReference>
<dbReference type="GO" id="GO:0009252">
    <property type="term" value="P:peptidoglycan biosynthetic process"/>
    <property type="evidence" value="ECO:0007669"/>
    <property type="project" value="UniProtKB-UniRule"/>
</dbReference>
<dbReference type="GO" id="GO:0008360">
    <property type="term" value="P:regulation of cell shape"/>
    <property type="evidence" value="ECO:0007669"/>
    <property type="project" value="UniProtKB-KW"/>
</dbReference>
<dbReference type="Gene3D" id="3.90.190.20">
    <property type="entry name" value="Mur ligase, C-terminal domain"/>
    <property type="match status" value="1"/>
</dbReference>
<dbReference type="Gene3D" id="3.40.1190.10">
    <property type="entry name" value="Mur-like, catalytic domain"/>
    <property type="match status" value="1"/>
</dbReference>
<dbReference type="Gene3D" id="3.40.50.720">
    <property type="entry name" value="NAD(P)-binding Rossmann-like Domain"/>
    <property type="match status" value="1"/>
</dbReference>
<dbReference type="HAMAP" id="MF_00639">
    <property type="entry name" value="MurD"/>
    <property type="match status" value="1"/>
</dbReference>
<dbReference type="InterPro" id="IPR036565">
    <property type="entry name" value="Mur-like_cat_sf"/>
</dbReference>
<dbReference type="InterPro" id="IPR004101">
    <property type="entry name" value="Mur_ligase_C"/>
</dbReference>
<dbReference type="InterPro" id="IPR036615">
    <property type="entry name" value="Mur_ligase_C_dom_sf"/>
</dbReference>
<dbReference type="InterPro" id="IPR013221">
    <property type="entry name" value="Mur_ligase_cen"/>
</dbReference>
<dbReference type="InterPro" id="IPR005762">
    <property type="entry name" value="MurD"/>
</dbReference>
<dbReference type="NCBIfam" id="TIGR01087">
    <property type="entry name" value="murD"/>
    <property type="match status" value="1"/>
</dbReference>
<dbReference type="PANTHER" id="PTHR43692">
    <property type="entry name" value="UDP-N-ACETYLMURAMOYLALANINE--D-GLUTAMATE LIGASE"/>
    <property type="match status" value="1"/>
</dbReference>
<dbReference type="PANTHER" id="PTHR43692:SF1">
    <property type="entry name" value="UDP-N-ACETYLMURAMOYLALANINE--D-GLUTAMATE LIGASE"/>
    <property type="match status" value="1"/>
</dbReference>
<dbReference type="Pfam" id="PF02875">
    <property type="entry name" value="Mur_ligase_C"/>
    <property type="match status" value="1"/>
</dbReference>
<dbReference type="Pfam" id="PF08245">
    <property type="entry name" value="Mur_ligase_M"/>
    <property type="match status" value="1"/>
</dbReference>
<dbReference type="Pfam" id="PF21799">
    <property type="entry name" value="MurD-like_N"/>
    <property type="match status" value="1"/>
</dbReference>
<dbReference type="Pfam" id="PF21377">
    <property type="entry name" value="MurD_N"/>
    <property type="match status" value="1"/>
</dbReference>
<dbReference type="SUPFAM" id="SSF51984">
    <property type="entry name" value="MurCD N-terminal domain"/>
    <property type="match status" value="1"/>
</dbReference>
<dbReference type="SUPFAM" id="SSF53623">
    <property type="entry name" value="MurD-like peptide ligases, catalytic domain"/>
    <property type="match status" value="1"/>
</dbReference>
<dbReference type="SUPFAM" id="SSF53244">
    <property type="entry name" value="MurD-like peptide ligases, peptide-binding domain"/>
    <property type="match status" value="1"/>
</dbReference>
<comment type="function">
    <text evidence="1">Cell wall formation. Catalyzes the addition of glutamate to the nucleotide precursor UDP-N-acetylmuramoyl-L-alanine (UMA).</text>
</comment>
<comment type="catalytic activity">
    <reaction evidence="1">
        <text>UDP-N-acetyl-alpha-D-muramoyl-L-alanine + D-glutamate + ATP = UDP-N-acetyl-alpha-D-muramoyl-L-alanyl-D-glutamate + ADP + phosphate + H(+)</text>
        <dbReference type="Rhea" id="RHEA:16429"/>
        <dbReference type="ChEBI" id="CHEBI:15378"/>
        <dbReference type="ChEBI" id="CHEBI:29986"/>
        <dbReference type="ChEBI" id="CHEBI:30616"/>
        <dbReference type="ChEBI" id="CHEBI:43474"/>
        <dbReference type="ChEBI" id="CHEBI:83898"/>
        <dbReference type="ChEBI" id="CHEBI:83900"/>
        <dbReference type="ChEBI" id="CHEBI:456216"/>
        <dbReference type="EC" id="6.3.2.9"/>
    </reaction>
</comment>
<comment type="pathway">
    <text evidence="1">Cell wall biogenesis; peptidoglycan biosynthesis.</text>
</comment>
<comment type="subcellular location">
    <subcellularLocation>
        <location evidence="1">Cytoplasm</location>
    </subcellularLocation>
</comment>
<comment type="similarity">
    <text evidence="1">Belongs to the MurCDEF family.</text>
</comment>
<feature type="chain" id="PRO_1000130854" description="UDP-N-acetylmuramoylalanine--D-glutamate ligase">
    <location>
        <begin position="1"/>
        <end position="452"/>
    </location>
</feature>
<feature type="binding site" evidence="1">
    <location>
        <begin position="115"/>
        <end position="121"/>
    </location>
    <ligand>
        <name>ATP</name>
        <dbReference type="ChEBI" id="CHEBI:30616"/>
    </ligand>
</feature>
<protein>
    <recommendedName>
        <fullName evidence="1">UDP-N-acetylmuramoylalanine--D-glutamate ligase</fullName>
        <ecNumber evidence="1">6.3.2.9</ecNumber>
    </recommendedName>
    <alternativeName>
        <fullName evidence="1">D-glutamic acid-adding enzyme</fullName>
    </alternativeName>
    <alternativeName>
        <fullName evidence="1">UDP-N-acetylmuramoyl-L-alanyl-D-glutamate synthetase</fullName>
    </alternativeName>
</protein>
<accession>B2KEW4</accession>
<reference key="1">
    <citation type="journal article" date="2009" name="Appl. Environ. Microbiol.">
        <title>Genomic analysis of 'Elusimicrobium minutum,' the first cultivated representative of the phylum 'Elusimicrobia' (formerly termite group 1).</title>
        <authorList>
            <person name="Herlemann D.P.R."/>
            <person name="Geissinger O."/>
            <person name="Ikeda-Ohtsubo W."/>
            <person name="Kunin V."/>
            <person name="Sun H."/>
            <person name="Lapidus A."/>
            <person name="Hugenholtz P."/>
            <person name="Brune A."/>
        </authorList>
    </citation>
    <scope>NUCLEOTIDE SEQUENCE [LARGE SCALE GENOMIC DNA]</scope>
    <source>
        <strain>Pei191</strain>
    </source>
</reference>
<organism>
    <name type="scientific">Elusimicrobium minutum (strain Pei191)</name>
    <dbReference type="NCBI Taxonomy" id="445932"/>
    <lineage>
        <taxon>Bacteria</taxon>
        <taxon>Pseudomonadati</taxon>
        <taxon>Elusimicrobiota</taxon>
        <taxon>Elusimicrobia</taxon>
        <taxon>Elusimicrobiales</taxon>
        <taxon>Elusimicrobiaceae</taxon>
        <taxon>Elusimicrobium</taxon>
    </lineage>
</organism>
<keyword id="KW-0067">ATP-binding</keyword>
<keyword id="KW-0131">Cell cycle</keyword>
<keyword id="KW-0132">Cell division</keyword>
<keyword id="KW-0133">Cell shape</keyword>
<keyword id="KW-0961">Cell wall biogenesis/degradation</keyword>
<keyword id="KW-0963">Cytoplasm</keyword>
<keyword id="KW-0436">Ligase</keyword>
<keyword id="KW-0547">Nucleotide-binding</keyword>
<keyword id="KW-0573">Peptidoglycan synthesis</keyword>
<keyword id="KW-1185">Reference proteome</keyword>
<gene>
    <name evidence="1" type="primary">murD</name>
    <name type="ordered locus">Emin_1512</name>
</gene>